<sequence>MKNTELEQLINDKLNSAAISDYAPNGLQVEGKETVQKIVTGVTASQALLDEAVRLQADAVIVHHGYFWKGESPVIRGMKRRRLKTLLANDINLYGWHLPLDAHPELGNNAQLAALLGITVKGEIEPLVPWGELSMPVPGLELASWIEARLGRKPLWCGDTGPENVQRVAWCTGGGQSFIDSAARFGVDAFITGEVSEQTIHSAREQGLHFYAAGHHATERGGIRALSEWLNENTALDVTFIDIPNPA</sequence>
<protein>
    <recommendedName>
        <fullName>GTP cyclohydrolase 1 type 2 homolog</fullName>
    </recommendedName>
</protein>
<feature type="chain" id="PRO_0000147325" description="GTP cyclohydrolase 1 type 2 homolog">
    <location>
        <begin position="1"/>
        <end position="247"/>
    </location>
</feature>
<feature type="binding site" evidence="1">
    <location>
        <position position="63"/>
    </location>
    <ligand>
        <name>a divalent metal cation</name>
        <dbReference type="ChEBI" id="CHEBI:60240"/>
        <label>1</label>
    </ligand>
</feature>
<feature type="binding site" evidence="1">
    <location>
        <position position="64"/>
    </location>
    <ligand>
        <name>a divalent metal cation</name>
        <dbReference type="ChEBI" id="CHEBI:60240"/>
        <label>2</label>
    </ligand>
</feature>
<feature type="binding site" evidence="1">
    <location>
        <position position="101"/>
    </location>
    <ligand>
        <name>a divalent metal cation</name>
        <dbReference type="ChEBI" id="CHEBI:60240"/>
        <label>1</label>
    </ligand>
</feature>
<feature type="binding site" evidence="1">
    <location>
        <position position="215"/>
    </location>
    <ligand>
        <name>a divalent metal cation</name>
        <dbReference type="ChEBI" id="CHEBI:60240"/>
        <label>2</label>
    </ligand>
</feature>
<feature type="binding site" evidence="1">
    <location>
        <position position="219"/>
    </location>
    <ligand>
        <name>a divalent metal cation</name>
        <dbReference type="ChEBI" id="CHEBI:60240"/>
        <label>1</label>
    </ligand>
</feature>
<feature type="binding site" evidence="1">
    <location>
        <position position="219"/>
    </location>
    <ligand>
        <name>a divalent metal cation</name>
        <dbReference type="ChEBI" id="CHEBI:60240"/>
        <label>2</label>
    </ligand>
</feature>
<proteinExistence type="inferred from homology"/>
<name>GCH1L_SALTY</name>
<gene>
    <name type="primary">ybgI</name>
    <name type="ordered locus">STM0711</name>
</gene>
<evidence type="ECO:0000250" key="1">
    <source>
        <dbReference type="UniProtKB" id="P0AFP6"/>
    </source>
</evidence>
<evidence type="ECO:0000305" key="2"/>
<dbReference type="EMBL" id="AE006468">
    <property type="protein sequence ID" value="AAL19655.1"/>
    <property type="molecule type" value="Genomic_DNA"/>
</dbReference>
<dbReference type="RefSeq" id="NP_459696.1">
    <property type="nucleotide sequence ID" value="NC_003197.2"/>
</dbReference>
<dbReference type="RefSeq" id="WP_000798844.1">
    <property type="nucleotide sequence ID" value="NC_003197.2"/>
</dbReference>
<dbReference type="SMR" id="P67270"/>
<dbReference type="STRING" id="99287.STM0711"/>
<dbReference type="PaxDb" id="99287-STM0711"/>
<dbReference type="GeneID" id="1252231"/>
<dbReference type="KEGG" id="stm:STM0711"/>
<dbReference type="PATRIC" id="fig|99287.12.peg.743"/>
<dbReference type="HOGENOM" id="CLU_037423_3_0_6"/>
<dbReference type="OMA" id="RRVGWCT"/>
<dbReference type="PhylomeDB" id="P67270"/>
<dbReference type="BioCyc" id="SENT99287:STM0711-MONOMER"/>
<dbReference type="Proteomes" id="UP000001014">
    <property type="component" value="Chromosome"/>
</dbReference>
<dbReference type="GO" id="GO:0005737">
    <property type="term" value="C:cytoplasm"/>
    <property type="evidence" value="ECO:0000318"/>
    <property type="project" value="GO_Central"/>
</dbReference>
<dbReference type="GO" id="GO:0046872">
    <property type="term" value="F:metal ion binding"/>
    <property type="evidence" value="ECO:0007669"/>
    <property type="project" value="UniProtKB-KW"/>
</dbReference>
<dbReference type="GO" id="GO:0006281">
    <property type="term" value="P:DNA repair"/>
    <property type="evidence" value="ECO:0007669"/>
    <property type="project" value="UniProtKB-KW"/>
</dbReference>
<dbReference type="FunFam" id="3.40.1390.30:FF:000002">
    <property type="entry name" value="Nif3-like dinuclear metal center protein"/>
    <property type="match status" value="1"/>
</dbReference>
<dbReference type="FunFam" id="3.40.1390.30:FF:000003">
    <property type="entry name" value="Nif3-like dinuclear metal center protein"/>
    <property type="match status" value="1"/>
</dbReference>
<dbReference type="Gene3D" id="3.40.1390.30">
    <property type="entry name" value="NIF3 (NGG1p interacting factor 3)-like"/>
    <property type="match status" value="2"/>
</dbReference>
<dbReference type="InterPro" id="IPR002678">
    <property type="entry name" value="DUF34/NIF3"/>
</dbReference>
<dbReference type="InterPro" id="IPR036069">
    <property type="entry name" value="DUF34/NIF3_sf"/>
</dbReference>
<dbReference type="NCBIfam" id="NF008064">
    <property type="entry name" value="PRK10799.1"/>
    <property type="match status" value="1"/>
</dbReference>
<dbReference type="NCBIfam" id="TIGR00486">
    <property type="entry name" value="YbgI_SA1388"/>
    <property type="match status" value="1"/>
</dbReference>
<dbReference type="PANTHER" id="PTHR13799:SF14">
    <property type="entry name" value="GTP CYCLOHYDROLASE 1 TYPE 2 HOMOLOG"/>
    <property type="match status" value="1"/>
</dbReference>
<dbReference type="PANTHER" id="PTHR13799">
    <property type="entry name" value="NGG1 INTERACTING FACTOR 3"/>
    <property type="match status" value="1"/>
</dbReference>
<dbReference type="Pfam" id="PF01784">
    <property type="entry name" value="DUF34_NIF3"/>
    <property type="match status" value="1"/>
</dbReference>
<dbReference type="SUPFAM" id="SSF102705">
    <property type="entry name" value="NIF3 (NGG1p interacting factor 3)-like"/>
    <property type="match status" value="1"/>
</dbReference>
<organism>
    <name type="scientific">Salmonella typhimurium (strain LT2 / SGSC1412 / ATCC 700720)</name>
    <dbReference type="NCBI Taxonomy" id="99287"/>
    <lineage>
        <taxon>Bacteria</taxon>
        <taxon>Pseudomonadati</taxon>
        <taxon>Pseudomonadota</taxon>
        <taxon>Gammaproteobacteria</taxon>
        <taxon>Enterobacterales</taxon>
        <taxon>Enterobacteriaceae</taxon>
        <taxon>Salmonella</taxon>
    </lineage>
</organism>
<keyword id="KW-0227">DNA damage</keyword>
<keyword id="KW-0234">DNA repair</keyword>
<keyword id="KW-0479">Metal-binding</keyword>
<keyword id="KW-1185">Reference proteome</keyword>
<reference key="1">
    <citation type="journal article" date="2001" name="Nature">
        <title>Complete genome sequence of Salmonella enterica serovar Typhimurium LT2.</title>
        <authorList>
            <person name="McClelland M."/>
            <person name="Sanderson K.E."/>
            <person name="Spieth J."/>
            <person name="Clifton S.W."/>
            <person name="Latreille P."/>
            <person name="Courtney L."/>
            <person name="Porwollik S."/>
            <person name="Ali J."/>
            <person name="Dante M."/>
            <person name="Du F."/>
            <person name="Hou S."/>
            <person name="Layman D."/>
            <person name="Leonard S."/>
            <person name="Nguyen C."/>
            <person name="Scott K."/>
            <person name="Holmes A."/>
            <person name="Grewal N."/>
            <person name="Mulvaney E."/>
            <person name="Ryan E."/>
            <person name="Sun H."/>
            <person name="Florea L."/>
            <person name="Miller W."/>
            <person name="Stoneking T."/>
            <person name="Nhan M."/>
            <person name="Waterston R."/>
            <person name="Wilson R.K."/>
        </authorList>
    </citation>
    <scope>NUCLEOTIDE SEQUENCE [LARGE SCALE GENOMIC DNA]</scope>
    <source>
        <strain>LT2 / SGSC1412 / ATCC 700720</strain>
    </source>
</reference>
<comment type="function">
    <text evidence="1">Provides significant protection from radiation damage and may be involved in the degradation of radiation-damaged nucleotides.</text>
</comment>
<comment type="subunit">
    <text evidence="1">Toroid-shaped homohexamer. In the hexamer, 3 dimers assemble to form a ring-like structure surrounding a central hole.</text>
</comment>
<comment type="similarity">
    <text evidence="2">Belongs to the GTP cyclohydrolase I type 2/NIF3 family.</text>
</comment>
<accession>P67270</accession>
<accession>Q8XFW7</accession>